<sequence>MKSHIQSLLEQTLESFKQQGIVPADFEARIQVDRTKDKSHGDLATNLAMMLTKVAGKNPRELAQLIIDTLPASAYVAKVEIAGPGFINFFINDSALADQLQNAVNDEHLGIKLPTPQTVVVDYSSPNLAKEMHVGHLRSTIIGDSVVRALEFLGHKVIRQNHVGDWGTQFGMLLAYMEELRAKNGEKAQLELSDLENFYRAAKLRFDESAEFATRARQLVVELQSGDEYCNKLWREFNDISLSHCHEVYARLGVSLTRADVHGESAYNADLEQVVKDLDAQGLLTESNGAKVVFQEAFRNKEGEPLPVIIQKADGGYLYATSDLAAMRYRSNVLKADRVLYFVDLRQALHFQQVFSLAKLAKFVREDMSLEHLGFGTMNGEDGRPFKTRSGGVVKLVDLLEEANVRALELVRSKNPDMDEVTLTEIARVVGISAVKYADLSKNRTSDYIFSFEQMLSFEGNTAPYLLYAYTRVAGIFKRVTDLDLSQAKIVLEHEKEKDLGNKLAQFGEILSRVVDKGQPHVLCAYLYELAGAFSSFYEACPVLAADNDAQKNSRLLLAQLTARTLQKGLNLLGIETLERM</sequence>
<organism>
    <name type="scientific">Shewanella baltica (strain OS195)</name>
    <dbReference type="NCBI Taxonomy" id="399599"/>
    <lineage>
        <taxon>Bacteria</taxon>
        <taxon>Pseudomonadati</taxon>
        <taxon>Pseudomonadota</taxon>
        <taxon>Gammaproteobacteria</taxon>
        <taxon>Alteromonadales</taxon>
        <taxon>Shewanellaceae</taxon>
        <taxon>Shewanella</taxon>
    </lineage>
</organism>
<reference key="1">
    <citation type="submission" date="2007-11" db="EMBL/GenBank/DDBJ databases">
        <title>Complete sequence of chromosome of Shewanella baltica OS195.</title>
        <authorList>
            <consortium name="US DOE Joint Genome Institute"/>
            <person name="Copeland A."/>
            <person name="Lucas S."/>
            <person name="Lapidus A."/>
            <person name="Barry K."/>
            <person name="Glavina del Rio T."/>
            <person name="Dalin E."/>
            <person name="Tice H."/>
            <person name="Pitluck S."/>
            <person name="Chain P."/>
            <person name="Malfatti S."/>
            <person name="Shin M."/>
            <person name="Vergez L."/>
            <person name="Schmutz J."/>
            <person name="Larimer F."/>
            <person name="Land M."/>
            <person name="Hauser L."/>
            <person name="Kyrpides N."/>
            <person name="Kim E."/>
            <person name="Brettar I."/>
            <person name="Rodrigues J."/>
            <person name="Konstantinidis K."/>
            <person name="Klappenbach J."/>
            <person name="Hofle M."/>
            <person name="Tiedje J."/>
            <person name="Richardson P."/>
        </authorList>
    </citation>
    <scope>NUCLEOTIDE SEQUENCE [LARGE SCALE GENOMIC DNA]</scope>
    <source>
        <strain>OS195</strain>
    </source>
</reference>
<feature type="chain" id="PRO_1000076229" description="Arginine--tRNA ligase">
    <location>
        <begin position="1"/>
        <end position="581"/>
    </location>
</feature>
<feature type="short sequence motif" description="'HIGH' region">
    <location>
        <begin position="126"/>
        <end position="136"/>
    </location>
</feature>
<accession>A9KYS9</accession>
<comment type="catalytic activity">
    <reaction evidence="1">
        <text>tRNA(Arg) + L-arginine + ATP = L-arginyl-tRNA(Arg) + AMP + diphosphate</text>
        <dbReference type="Rhea" id="RHEA:20301"/>
        <dbReference type="Rhea" id="RHEA-COMP:9658"/>
        <dbReference type="Rhea" id="RHEA-COMP:9673"/>
        <dbReference type="ChEBI" id="CHEBI:30616"/>
        <dbReference type="ChEBI" id="CHEBI:32682"/>
        <dbReference type="ChEBI" id="CHEBI:33019"/>
        <dbReference type="ChEBI" id="CHEBI:78442"/>
        <dbReference type="ChEBI" id="CHEBI:78513"/>
        <dbReference type="ChEBI" id="CHEBI:456215"/>
        <dbReference type="EC" id="6.1.1.19"/>
    </reaction>
</comment>
<comment type="subunit">
    <text evidence="1">Monomer.</text>
</comment>
<comment type="subcellular location">
    <subcellularLocation>
        <location evidence="1">Cytoplasm</location>
    </subcellularLocation>
</comment>
<comment type="similarity">
    <text evidence="1">Belongs to the class-I aminoacyl-tRNA synthetase family.</text>
</comment>
<evidence type="ECO:0000255" key="1">
    <source>
        <dbReference type="HAMAP-Rule" id="MF_00123"/>
    </source>
</evidence>
<gene>
    <name evidence="1" type="primary">argS</name>
    <name type="ordered locus">Sbal195_0495</name>
</gene>
<proteinExistence type="inferred from homology"/>
<dbReference type="EC" id="6.1.1.19" evidence="1"/>
<dbReference type="EMBL" id="CP000891">
    <property type="protein sequence ID" value="ABX47673.1"/>
    <property type="molecule type" value="Genomic_DNA"/>
</dbReference>
<dbReference type="RefSeq" id="WP_006083280.1">
    <property type="nucleotide sequence ID" value="NC_009997.1"/>
</dbReference>
<dbReference type="SMR" id="A9KYS9"/>
<dbReference type="GeneID" id="11770825"/>
<dbReference type="KEGG" id="sbn:Sbal195_0495"/>
<dbReference type="HOGENOM" id="CLU_006406_5_1_6"/>
<dbReference type="Proteomes" id="UP000000770">
    <property type="component" value="Chromosome"/>
</dbReference>
<dbReference type="GO" id="GO:0005737">
    <property type="term" value="C:cytoplasm"/>
    <property type="evidence" value="ECO:0007669"/>
    <property type="project" value="UniProtKB-SubCell"/>
</dbReference>
<dbReference type="GO" id="GO:0004814">
    <property type="term" value="F:arginine-tRNA ligase activity"/>
    <property type="evidence" value="ECO:0007669"/>
    <property type="project" value="UniProtKB-UniRule"/>
</dbReference>
<dbReference type="GO" id="GO:0005524">
    <property type="term" value="F:ATP binding"/>
    <property type="evidence" value="ECO:0007669"/>
    <property type="project" value="UniProtKB-UniRule"/>
</dbReference>
<dbReference type="GO" id="GO:0006420">
    <property type="term" value="P:arginyl-tRNA aminoacylation"/>
    <property type="evidence" value="ECO:0007669"/>
    <property type="project" value="UniProtKB-UniRule"/>
</dbReference>
<dbReference type="CDD" id="cd07956">
    <property type="entry name" value="Anticodon_Ia_Arg"/>
    <property type="match status" value="1"/>
</dbReference>
<dbReference type="CDD" id="cd00671">
    <property type="entry name" value="ArgRS_core"/>
    <property type="match status" value="1"/>
</dbReference>
<dbReference type="FunFam" id="1.10.730.10:FF:000001">
    <property type="entry name" value="Arginine--tRNA ligase"/>
    <property type="match status" value="1"/>
</dbReference>
<dbReference type="FunFam" id="3.30.1360.70:FF:000003">
    <property type="entry name" value="Arginine--tRNA ligase"/>
    <property type="match status" value="1"/>
</dbReference>
<dbReference type="FunFam" id="3.40.50.620:FF:000030">
    <property type="entry name" value="Arginine--tRNA ligase"/>
    <property type="match status" value="1"/>
</dbReference>
<dbReference type="Gene3D" id="3.30.1360.70">
    <property type="entry name" value="Arginyl tRNA synthetase N-terminal domain"/>
    <property type="match status" value="1"/>
</dbReference>
<dbReference type="Gene3D" id="3.40.50.620">
    <property type="entry name" value="HUPs"/>
    <property type="match status" value="1"/>
</dbReference>
<dbReference type="Gene3D" id="1.10.730.10">
    <property type="entry name" value="Isoleucyl-tRNA Synthetase, Domain 1"/>
    <property type="match status" value="1"/>
</dbReference>
<dbReference type="HAMAP" id="MF_00123">
    <property type="entry name" value="Arg_tRNA_synth"/>
    <property type="match status" value="1"/>
</dbReference>
<dbReference type="InterPro" id="IPR001412">
    <property type="entry name" value="aa-tRNA-synth_I_CS"/>
</dbReference>
<dbReference type="InterPro" id="IPR001278">
    <property type="entry name" value="Arg-tRNA-ligase"/>
</dbReference>
<dbReference type="InterPro" id="IPR005148">
    <property type="entry name" value="Arg-tRNA-synth_N"/>
</dbReference>
<dbReference type="InterPro" id="IPR036695">
    <property type="entry name" value="Arg-tRNA-synth_N_sf"/>
</dbReference>
<dbReference type="InterPro" id="IPR035684">
    <property type="entry name" value="ArgRS_core"/>
</dbReference>
<dbReference type="InterPro" id="IPR008909">
    <property type="entry name" value="DALR_anticod-bd"/>
</dbReference>
<dbReference type="InterPro" id="IPR014729">
    <property type="entry name" value="Rossmann-like_a/b/a_fold"/>
</dbReference>
<dbReference type="InterPro" id="IPR009080">
    <property type="entry name" value="tRNAsynth_Ia_anticodon-bd"/>
</dbReference>
<dbReference type="NCBIfam" id="TIGR00456">
    <property type="entry name" value="argS"/>
    <property type="match status" value="1"/>
</dbReference>
<dbReference type="PANTHER" id="PTHR11956:SF5">
    <property type="entry name" value="ARGININE--TRNA LIGASE, CYTOPLASMIC"/>
    <property type="match status" value="1"/>
</dbReference>
<dbReference type="PANTHER" id="PTHR11956">
    <property type="entry name" value="ARGINYL-TRNA SYNTHETASE"/>
    <property type="match status" value="1"/>
</dbReference>
<dbReference type="Pfam" id="PF03485">
    <property type="entry name" value="Arg_tRNA_synt_N"/>
    <property type="match status" value="1"/>
</dbReference>
<dbReference type="Pfam" id="PF05746">
    <property type="entry name" value="DALR_1"/>
    <property type="match status" value="1"/>
</dbReference>
<dbReference type="Pfam" id="PF00750">
    <property type="entry name" value="tRNA-synt_1d"/>
    <property type="match status" value="1"/>
</dbReference>
<dbReference type="PRINTS" id="PR01038">
    <property type="entry name" value="TRNASYNTHARG"/>
</dbReference>
<dbReference type="SMART" id="SM01016">
    <property type="entry name" value="Arg_tRNA_synt_N"/>
    <property type="match status" value="1"/>
</dbReference>
<dbReference type="SMART" id="SM00836">
    <property type="entry name" value="DALR_1"/>
    <property type="match status" value="1"/>
</dbReference>
<dbReference type="SUPFAM" id="SSF47323">
    <property type="entry name" value="Anticodon-binding domain of a subclass of class I aminoacyl-tRNA synthetases"/>
    <property type="match status" value="1"/>
</dbReference>
<dbReference type="SUPFAM" id="SSF55190">
    <property type="entry name" value="Arginyl-tRNA synthetase (ArgRS), N-terminal 'additional' domain"/>
    <property type="match status" value="1"/>
</dbReference>
<dbReference type="SUPFAM" id="SSF52374">
    <property type="entry name" value="Nucleotidylyl transferase"/>
    <property type="match status" value="1"/>
</dbReference>
<dbReference type="PROSITE" id="PS00178">
    <property type="entry name" value="AA_TRNA_LIGASE_I"/>
    <property type="match status" value="1"/>
</dbReference>
<keyword id="KW-0030">Aminoacyl-tRNA synthetase</keyword>
<keyword id="KW-0067">ATP-binding</keyword>
<keyword id="KW-0963">Cytoplasm</keyword>
<keyword id="KW-0436">Ligase</keyword>
<keyword id="KW-0547">Nucleotide-binding</keyword>
<keyword id="KW-0648">Protein biosynthesis</keyword>
<protein>
    <recommendedName>
        <fullName evidence="1">Arginine--tRNA ligase</fullName>
        <ecNumber evidence="1">6.1.1.19</ecNumber>
    </recommendedName>
    <alternativeName>
        <fullName evidence="1">Arginyl-tRNA synthetase</fullName>
        <shortName evidence="1">ArgRS</shortName>
    </alternativeName>
</protein>
<name>SYR_SHEB9</name>